<name>SYV_SHIFL</name>
<comment type="function">
    <text evidence="1">Catalyzes the attachment of valine to tRNA(Val). As ValRS can inadvertently accommodate and process structurally similar amino acids such as threonine, to avoid such errors, it has a 'posttransfer' editing activity that hydrolyzes mischarged Thr-tRNA(Val) in a tRNA-dependent manner.</text>
</comment>
<comment type="catalytic activity">
    <reaction evidence="1">
        <text>tRNA(Val) + L-valine + ATP = L-valyl-tRNA(Val) + AMP + diphosphate</text>
        <dbReference type="Rhea" id="RHEA:10704"/>
        <dbReference type="Rhea" id="RHEA-COMP:9672"/>
        <dbReference type="Rhea" id="RHEA-COMP:9708"/>
        <dbReference type="ChEBI" id="CHEBI:30616"/>
        <dbReference type="ChEBI" id="CHEBI:33019"/>
        <dbReference type="ChEBI" id="CHEBI:57762"/>
        <dbReference type="ChEBI" id="CHEBI:78442"/>
        <dbReference type="ChEBI" id="CHEBI:78537"/>
        <dbReference type="ChEBI" id="CHEBI:456215"/>
        <dbReference type="EC" id="6.1.1.9"/>
    </reaction>
</comment>
<comment type="subunit">
    <text evidence="1">Monomer.</text>
</comment>
<comment type="subcellular location">
    <subcellularLocation>
        <location evidence="1">Cytoplasm</location>
    </subcellularLocation>
</comment>
<comment type="domain">
    <text evidence="1">ValRS has two distinct active sites: one for aminoacylation and one for editing. The misactivated threonine is translocated from the active site to the editing site.</text>
</comment>
<comment type="domain">
    <text evidence="1">The C-terminal coiled-coil domain is crucial for aminoacylation activity.</text>
</comment>
<comment type="similarity">
    <text evidence="1">Belongs to the class-I aminoacyl-tRNA synthetase family. ValS type 1 subfamily.</text>
</comment>
<sequence length="951" mass="108177">MEKTYNPQDIEQPLYEHWEKQGYFKPNGDESQESFCIMIPPPNVTGSLHMGHAFQQTIMDTMIRYQRMQGKNTLWQVGTDHAGIATQMVVERKIAAEEGKTRHDYGREAFIDKIWEWKAESGGTITRQMRRLGNSVDWERERFTMDEGLSNAVKEVFVRLYKEDLIYRGKRLVNWDPKLRTAISDLEVENRESKGSMWHIRYPLADGAKTADGKDYLVVATTRPETLLGDTGVAVNPEDPRYKDLIGKYVILPLVNRRIPIVGDEHADMEKGTGCVKITPAHDFNDYEVGKRHALPMINILTFDGDIRESAQVFDTKGNESDVYSSEIPAEFQKLERFAARKAVVAAVDALGLLEEIKPHDLTVPYGDRGGVVIEPMLTDQWYVRADVLAKPAVEAVENGDIQFVPKQYENMYFSWMRDIQDWCISRQLWWGHRIPAWYDEAGNVYVGRNEEEVRKENNLGANVALRQDEDVLDTWFSSALWTFSTLGWPENTDALRQFHPTSVMVSGFDIIFFWIARMIMMTMHFIKDENGKPQVPFHTVYMTGLIRDDEGQKMSKSKGNVIDPLDMVDGISLPELLEKRTGNMMQPQLADKIRKRTEKQFPNGIEPHGTDALRFTLAALASTGRDINWDMKRLEGYRNFCNKLWNASRFVLMNTEGQDCGFNGGEMTLSLADRWILAEFNQTIKAYREALDSFRFDIAAGILYEFTWNQFCDWYLELTKPVMNGGTEAELRGTRHTLVTVLEGLLRLAHPIIPFITETIWQRVKVLCGITADTIMLQPFPQYDASQVDEAALADTEWLKQAIVAVRNIRAEMNIAPGKPLELLLRGCSADAERRVNENRGFLQTLARLESITVLPADDKGPVSVTKIIDGAELLIPMAGLINKEDELARLAKEVAKIEGEISRIENKLANEGFVARAPEAVIAKEREKLEGYAEAKAKLIEQQAVIAAL</sequence>
<keyword id="KW-0030">Aminoacyl-tRNA synthetase</keyword>
<keyword id="KW-0067">ATP-binding</keyword>
<keyword id="KW-0175">Coiled coil</keyword>
<keyword id="KW-0963">Cytoplasm</keyword>
<keyword id="KW-0436">Ligase</keyword>
<keyword id="KW-0547">Nucleotide-binding</keyword>
<keyword id="KW-0648">Protein biosynthesis</keyword>
<keyword id="KW-1185">Reference proteome</keyword>
<evidence type="ECO:0000255" key="1">
    <source>
        <dbReference type="HAMAP-Rule" id="MF_02004"/>
    </source>
</evidence>
<organism>
    <name type="scientific">Shigella flexneri</name>
    <dbReference type="NCBI Taxonomy" id="623"/>
    <lineage>
        <taxon>Bacteria</taxon>
        <taxon>Pseudomonadati</taxon>
        <taxon>Pseudomonadota</taxon>
        <taxon>Gammaproteobacteria</taxon>
        <taxon>Enterobacterales</taxon>
        <taxon>Enterobacteriaceae</taxon>
        <taxon>Shigella</taxon>
    </lineage>
</organism>
<protein>
    <recommendedName>
        <fullName evidence="1">Valine--tRNA ligase</fullName>
        <ecNumber evidence="1">6.1.1.9</ecNumber>
    </recommendedName>
    <alternativeName>
        <fullName evidence="1">Valyl-tRNA synthetase</fullName>
        <shortName evidence="1">ValRS</shortName>
    </alternativeName>
</protein>
<accession>Q83IM5</accession>
<accession>Q7BYM4</accession>
<feature type="chain" id="PRO_0000224556" description="Valine--tRNA ligase">
    <location>
        <begin position="1"/>
        <end position="951"/>
    </location>
</feature>
<feature type="coiled-coil region" evidence="1">
    <location>
        <begin position="880"/>
        <end position="944"/>
    </location>
</feature>
<feature type="short sequence motif" description="'HIGH' region">
    <location>
        <begin position="42"/>
        <end position="52"/>
    </location>
</feature>
<feature type="short sequence motif" description="'KMSKS' region">
    <location>
        <begin position="554"/>
        <end position="558"/>
    </location>
</feature>
<feature type="binding site" evidence="1">
    <location>
        <position position="557"/>
    </location>
    <ligand>
        <name>ATP</name>
        <dbReference type="ChEBI" id="CHEBI:30616"/>
    </ligand>
</feature>
<gene>
    <name evidence="1" type="primary">valS</name>
    <name type="ordered locus">SF4231</name>
    <name type="ordered locus">S4492</name>
</gene>
<proteinExistence type="inferred from homology"/>
<dbReference type="EC" id="6.1.1.9" evidence="1"/>
<dbReference type="EMBL" id="AE005674">
    <property type="protein sequence ID" value="AAN45650.1"/>
    <property type="molecule type" value="Genomic_DNA"/>
</dbReference>
<dbReference type="EMBL" id="AE014073">
    <property type="protein sequence ID" value="AAP19438.1"/>
    <property type="molecule type" value="Genomic_DNA"/>
</dbReference>
<dbReference type="RefSeq" id="NP_709943.1">
    <property type="nucleotide sequence ID" value="NC_004337.2"/>
</dbReference>
<dbReference type="RefSeq" id="WP_000416415.1">
    <property type="nucleotide sequence ID" value="NZ_WPGW01000110.1"/>
</dbReference>
<dbReference type="SMR" id="Q83IM5"/>
<dbReference type="STRING" id="198214.SF4231"/>
<dbReference type="PaxDb" id="198214-SF4231"/>
<dbReference type="GeneID" id="1024980"/>
<dbReference type="KEGG" id="sfl:SF4231"/>
<dbReference type="KEGG" id="sfx:S4492"/>
<dbReference type="PATRIC" id="fig|198214.7.peg.4991"/>
<dbReference type="HOGENOM" id="CLU_001493_0_2_6"/>
<dbReference type="Proteomes" id="UP000001006">
    <property type="component" value="Chromosome"/>
</dbReference>
<dbReference type="Proteomes" id="UP000002673">
    <property type="component" value="Chromosome"/>
</dbReference>
<dbReference type="GO" id="GO:0005829">
    <property type="term" value="C:cytosol"/>
    <property type="evidence" value="ECO:0007669"/>
    <property type="project" value="TreeGrafter"/>
</dbReference>
<dbReference type="GO" id="GO:0002161">
    <property type="term" value="F:aminoacyl-tRNA deacylase activity"/>
    <property type="evidence" value="ECO:0007669"/>
    <property type="project" value="InterPro"/>
</dbReference>
<dbReference type="GO" id="GO:0005524">
    <property type="term" value="F:ATP binding"/>
    <property type="evidence" value="ECO:0007669"/>
    <property type="project" value="UniProtKB-UniRule"/>
</dbReference>
<dbReference type="GO" id="GO:0004832">
    <property type="term" value="F:valine-tRNA ligase activity"/>
    <property type="evidence" value="ECO:0007669"/>
    <property type="project" value="UniProtKB-UniRule"/>
</dbReference>
<dbReference type="GO" id="GO:0006438">
    <property type="term" value="P:valyl-tRNA aminoacylation"/>
    <property type="evidence" value="ECO:0007669"/>
    <property type="project" value="UniProtKB-UniRule"/>
</dbReference>
<dbReference type="CDD" id="cd07962">
    <property type="entry name" value="Anticodon_Ia_Val"/>
    <property type="match status" value="1"/>
</dbReference>
<dbReference type="CDD" id="cd00817">
    <property type="entry name" value="ValRS_core"/>
    <property type="match status" value="1"/>
</dbReference>
<dbReference type="FunFam" id="1.10.287.380:FF:000001">
    <property type="entry name" value="Valine--tRNA ligase"/>
    <property type="match status" value="1"/>
</dbReference>
<dbReference type="FunFam" id="1.10.730.10:FF:000007">
    <property type="entry name" value="Valine--tRNA ligase"/>
    <property type="match status" value="1"/>
</dbReference>
<dbReference type="FunFam" id="3.40.50.620:FF:000032">
    <property type="entry name" value="Valine--tRNA ligase"/>
    <property type="match status" value="1"/>
</dbReference>
<dbReference type="FunFam" id="3.40.50.620:FF:000146">
    <property type="entry name" value="Valine--tRNA ligase"/>
    <property type="match status" value="1"/>
</dbReference>
<dbReference type="FunFam" id="3.90.740.10:FF:000021">
    <property type="entry name" value="Valine--tRNA ligase"/>
    <property type="match status" value="1"/>
</dbReference>
<dbReference type="Gene3D" id="3.40.50.620">
    <property type="entry name" value="HUPs"/>
    <property type="match status" value="2"/>
</dbReference>
<dbReference type="Gene3D" id="1.10.730.10">
    <property type="entry name" value="Isoleucyl-tRNA Synthetase, Domain 1"/>
    <property type="match status" value="1"/>
</dbReference>
<dbReference type="Gene3D" id="1.10.287.380">
    <property type="entry name" value="Valyl-tRNA synthetase, C-terminal domain"/>
    <property type="match status" value="1"/>
</dbReference>
<dbReference type="Gene3D" id="3.90.740.10">
    <property type="entry name" value="Valyl/Leucyl/Isoleucyl-tRNA synthetase, editing domain"/>
    <property type="match status" value="2"/>
</dbReference>
<dbReference type="HAMAP" id="MF_02004">
    <property type="entry name" value="Val_tRNA_synth_type1"/>
    <property type="match status" value="1"/>
</dbReference>
<dbReference type="InterPro" id="IPR001412">
    <property type="entry name" value="aa-tRNA-synth_I_CS"/>
</dbReference>
<dbReference type="InterPro" id="IPR002300">
    <property type="entry name" value="aa-tRNA-synth_Ia"/>
</dbReference>
<dbReference type="InterPro" id="IPR033705">
    <property type="entry name" value="Anticodon_Ia_Val"/>
</dbReference>
<dbReference type="InterPro" id="IPR013155">
    <property type="entry name" value="M/V/L/I-tRNA-synth_anticd-bd"/>
</dbReference>
<dbReference type="InterPro" id="IPR014729">
    <property type="entry name" value="Rossmann-like_a/b/a_fold"/>
</dbReference>
<dbReference type="InterPro" id="IPR010978">
    <property type="entry name" value="tRNA-bd_arm"/>
</dbReference>
<dbReference type="InterPro" id="IPR009080">
    <property type="entry name" value="tRNAsynth_Ia_anticodon-bd"/>
</dbReference>
<dbReference type="InterPro" id="IPR037118">
    <property type="entry name" value="Val-tRNA_synth_C_sf"/>
</dbReference>
<dbReference type="InterPro" id="IPR019499">
    <property type="entry name" value="Val-tRNA_synth_tRNA-bd"/>
</dbReference>
<dbReference type="InterPro" id="IPR009008">
    <property type="entry name" value="Val/Leu/Ile-tRNA-synth_edit"/>
</dbReference>
<dbReference type="InterPro" id="IPR002303">
    <property type="entry name" value="Valyl-tRNA_ligase"/>
</dbReference>
<dbReference type="NCBIfam" id="NF004349">
    <property type="entry name" value="PRK05729.1"/>
    <property type="match status" value="1"/>
</dbReference>
<dbReference type="NCBIfam" id="TIGR00422">
    <property type="entry name" value="valS"/>
    <property type="match status" value="1"/>
</dbReference>
<dbReference type="PANTHER" id="PTHR11946:SF93">
    <property type="entry name" value="VALINE--TRNA LIGASE, CHLOROPLASTIC_MITOCHONDRIAL 2"/>
    <property type="match status" value="1"/>
</dbReference>
<dbReference type="PANTHER" id="PTHR11946">
    <property type="entry name" value="VALYL-TRNA SYNTHETASES"/>
    <property type="match status" value="1"/>
</dbReference>
<dbReference type="Pfam" id="PF08264">
    <property type="entry name" value="Anticodon_1"/>
    <property type="match status" value="1"/>
</dbReference>
<dbReference type="Pfam" id="PF00133">
    <property type="entry name" value="tRNA-synt_1"/>
    <property type="match status" value="1"/>
</dbReference>
<dbReference type="Pfam" id="PF10458">
    <property type="entry name" value="Val_tRNA-synt_C"/>
    <property type="match status" value="1"/>
</dbReference>
<dbReference type="PRINTS" id="PR00986">
    <property type="entry name" value="TRNASYNTHVAL"/>
</dbReference>
<dbReference type="SUPFAM" id="SSF47323">
    <property type="entry name" value="Anticodon-binding domain of a subclass of class I aminoacyl-tRNA synthetases"/>
    <property type="match status" value="1"/>
</dbReference>
<dbReference type="SUPFAM" id="SSF52374">
    <property type="entry name" value="Nucleotidylyl transferase"/>
    <property type="match status" value="1"/>
</dbReference>
<dbReference type="SUPFAM" id="SSF46589">
    <property type="entry name" value="tRNA-binding arm"/>
    <property type="match status" value="1"/>
</dbReference>
<dbReference type="SUPFAM" id="SSF50677">
    <property type="entry name" value="ValRS/IleRS/LeuRS editing domain"/>
    <property type="match status" value="1"/>
</dbReference>
<dbReference type="PROSITE" id="PS00178">
    <property type="entry name" value="AA_TRNA_LIGASE_I"/>
    <property type="match status" value="1"/>
</dbReference>
<reference key="1">
    <citation type="journal article" date="2002" name="Nucleic Acids Res.">
        <title>Genome sequence of Shigella flexneri 2a: insights into pathogenicity through comparison with genomes of Escherichia coli K12 and O157.</title>
        <authorList>
            <person name="Jin Q."/>
            <person name="Yuan Z."/>
            <person name="Xu J."/>
            <person name="Wang Y."/>
            <person name="Shen Y."/>
            <person name="Lu W."/>
            <person name="Wang J."/>
            <person name="Liu H."/>
            <person name="Yang J."/>
            <person name="Yang F."/>
            <person name="Zhang X."/>
            <person name="Zhang J."/>
            <person name="Yang G."/>
            <person name="Wu H."/>
            <person name="Qu D."/>
            <person name="Dong J."/>
            <person name="Sun L."/>
            <person name="Xue Y."/>
            <person name="Zhao A."/>
            <person name="Gao Y."/>
            <person name="Zhu J."/>
            <person name="Kan B."/>
            <person name="Ding K."/>
            <person name="Chen S."/>
            <person name="Cheng H."/>
            <person name="Yao Z."/>
            <person name="He B."/>
            <person name="Chen R."/>
            <person name="Ma D."/>
            <person name="Qiang B."/>
            <person name="Wen Y."/>
            <person name="Hou Y."/>
            <person name="Yu J."/>
        </authorList>
    </citation>
    <scope>NUCLEOTIDE SEQUENCE [LARGE SCALE GENOMIC DNA]</scope>
    <source>
        <strain>301 / Serotype 2a</strain>
    </source>
</reference>
<reference key="2">
    <citation type="journal article" date="2003" name="Infect. Immun.">
        <title>Complete genome sequence and comparative genomics of Shigella flexneri serotype 2a strain 2457T.</title>
        <authorList>
            <person name="Wei J."/>
            <person name="Goldberg M.B."/>
            <person name="Burland V."/>
            <person name="Venkatesan M.M."/>
            <person name="Deng W."/>
            <person name="Fournier G."/>
            <person name="Mayhew G.F."/>
            <person name="Plunkett G. III"/>
            <person name="Rose D.J."/>
            <person name="Darling A."/>
            <person name="Mau B."/>
            <person name="Perna N.T."/>
            <person name="Payne S.M."/>
            <person name="Runyen-Janecky L.J."/>
            <person name="Zhou S."/>
            <person name="Schwartz D.C."/>
            <person name="Blattner F.R."/>
        </authorList>
    </citation>
    <scope>NUCLEOTIDE SEQUENCE [LARGE SCALE GENOMIC DNA]</scope>
    <source>
        <strain>ATCC 700930 / 2457T / Serotype 2a</strain>
    </source>
</reference>